<reference key="1">
    <citation type="journal article" date="1992" name="J. Bacteriol.">
        <title>Sequence of the GLN1 gene of Saccharomyces cerevisiae: role of the upstream region in regulation of glutamine synthetase expression.</title>
        <authorList>
            <person name="Minehart P.L."/>
            <person name="Magasanik B."/>
        </authorList>
    </citation>
    <scope>NUCLEOTIDE SEQUENCE [GENOMIC DNA]</scope>
    <source>
        <strain>ATCC 204508 / S288c</strain>
    </source>
</reference>
<reference key="2">
    <citation type="journal article" date="1997" name="Nature">
        <title>The nucleotide sequence of Saccharomyces cerevisiae chromosome XVI.</title>
        <authorList>
            <person name="Bussey H."/>
            <person name="Storms R.K."/>
            <person name="Ahmed A."/>
            <person name="Albermann K."/>
            <person name="Allen E."/>
            <person name="Ansorge W."/>
            <person name="Araujo R."/>
            <person name="Aparicio A."/>
            <person name="Barrell B.G."/>
            <person name="Badcock K."/>
            <person name="Benes V."/>
            <person name="Botstein D."/>
            <person name="Bowman S."/>
            <person name="Brueckner M."/>
            <person name="Carpenter J."/>
            <person name="Cherry J.M."/>
            <person name="Chung E."/>
            <person name="Churcher C.M."/>
            <person name="Coster F."/>
            <person name="Davis K."/>
            <person name="Davis R.W."/>
            <person name="Dietrich F.S."/>
            <person name="Delius H."/>
            <person name="DiPaolo T."/>
            <person name="Dubois E."/>
            <person name="Duesterhoeft A."/>
            <person name="Duncan M."/>
            <person name="Floeth M."/>
            <person name="Fortin N."/>
            <person name="Friesen J.D."/>
            <person name="Fritz C."/>
            <person name="Goffeau A."/>
            <person name="Hall J."/>
            <person name="Hebling U."/>
            <person name="Heumann K."/>
            <person name="Hilbert H."/>
            <person name="Hillier L.W."/>
            <person name="Hunicke-Smith S."/>
            <person name="Hyman R.W."/>
            <person name="Johnston M."/>
            <person name="Kalman S."/>
            <person name="Kleine K."/>
            <person name="Komp C."/>
            <person name="Kurdi O."/>
            <person name="Lashkari D."/>
            <person name="Lew H."/>
            <person name="Lin A."/>
            <person name="Lin D."/>
            <person name="Louis E.J."/>
            <person name="Marathe R."/>
            <person name="Messenguy F."/>
            <person name="Mewes H.-W."/>
            <person name="Mirtipati S."/>
            <person name="Moestl D."/>
            <person name="Mueller-Auer S."/>
            <person name="Namath A."/>
            <person name="Nentwich U."/>
            <person name="Oefner P."/>
            <person name="Pearson D."/>
            <person name="Petel F.X."/>
            <person name="Pohl T.M."/>
            <person name="Purnelle B."/>
            <person name="Rajandream M.A."/>
            <person name="Rechmann S."/>
            <person name="Rieger M."/>
            <person name="Riles L."/>
            <person name="Roberts D."/>
            <person name="Schaefer M."/>
            <person name="Scharfe M."/>
            <person name="Scherens B."/>
            <person name="Schramm S."/>
            <person name="Schroeder M."/>
            <person name="Sdicu A.-M."/>
            <person name="Tettelin H."/>
            <person name="Urrestarazu L.A."/>
            <person name="Ushinsky S."/>
            <person name="Vierendeels F."/>
            <person name="Vissers S."/>
            <person name="Voss H."/>
            <person name="Walsh S.V."/>
            <person name="Wambutt R."/>
            <person name="Wang Y."/>
            <person name="Wedler E."/>
            <person name="Wedler H."/>
            <person name="Winnett E."/>
            <person name="Zhong W.-W."/>
            <person name="Zollner A."/>
            <person name="Vo D.H."/>
            <person name="Hani J."/>
        </authorList>
    </citation>
    <scope>NUCLEOTIDE SEQUENCE [LARGE SCALE GENOMIC DNA]</scope>
    <source>
        <strain>ATCC 204508 / S288c</strain>
    </source>
</reference>
<reference key="3">
    <citation type="journal article" date="2014" name="G3 (Bethesda)">
        <title>The reference genome sequence of Saccharomyces cerevisiae: Then and now.</title>
        <authorList>
            <person name="Engel S.R."/>
            <person name="Dietrich F.S."/>
            <person name="Fisk D.G."/>
            <person name="Binkley G."/>
            <person name="Balakrishnan R."/>
            <person name="Costanzo M.C."/>
            <person name="Dwight S.S."/>
            <person name="Hitz B.C."/>
            <person name="Karra K."/>
            <person name="Nash R.S."/>
            <person name="Weng S."/>
            <person name="Wong E.D."/>
            <person name="Lloyd P."/>
            <person name="Skrzypek M.S."/>
            <person name="Miyasato S.R."/>
            <person name="Simison M."/>
            <person name="Cherry J.M."/>
        </authorList>
    </citation>
    <scope>GENOME REANNOTATION</scope>
    <scope>SEQUENCE REVISION TO 251 AND 264</scope>
    <source>
        <strain>ATCC 204508 / S288c</strain>
    </source>
</reference>
<reference key="4">
    <citation type="journal article" date="1988" name="J. Biol. Chem.">
        <title>Sequence of peptides from Saccharomyces cerevisiae glutamine synthetase. N-terminal peptide and ATP-binding domain.</title>
        <authorList>
            <person name="Kim K.H."/>
            <person name="Rhee S.G."/>
        </authorList>
    </citation>
    <scope>PROTEIN SEQUENCE OF 2-8; 149-166; 171-178; 220-224 AND 286-293</scope>
</reference>
<reference key="5">
    <citation type="journal article" date="1997" name="Electrophoresis">
        <title>Proteome studies of Saccharomyces cerevisiae: identification and characterization of abundant proteins.</title>
        <authorList>
            <person name="Garrels J.I."/>
            <person name="McLaughlin C.S."/>
            <person name="Warner J.R."/>
            <person name="Futcher B."/>
            <person name="Latter G.I."/>
            <person name="Kobayashi R."/>
            <person name="Schwender B."/>
            <person name="Volpe T."/>
            <person name="Anderson D.S."/>
            <person name="Mesquita-Fuentes R."/>
            <person name="Payne W.E."/>
        </authorList>
    </citation>
    <scope>ACETYLATION AT ALA-2</scope>
</reference>
<reference key="6">
    <citation type="journal article" date="2003" name="Nature">
        <title>Global analysis of protein localization in budding yeast.</title>
        <authorList>
            <person name="Huh W.-K."/>
            <person name="Falvo J.V."/>
            <person name="Gerke L.C."/>
            <person name="Carroll A.S."/>
            <person name="Howson R.W."/>
            <person name="Weissman J.S."/>
            <person name="O'Shea E.K."/>
        </authorList>
    </citation>
    <scope>SUBCELLULAR LOCATION [LARGE SCALE ANALYSIS]</scope>
</reference>
<reference key="7">
    <citation type="journal article" date="2003" name="Nature">
        <title>Global analysis of protein expression in yeast.</title>
        <authorList>
            <person name="Ghaemmaghami S."/>
            <person name="Huh W.-K."/>
            <person name="Bower K."/>
            <person name="Howson R.W."/>
            <person name="Belle A."/>
            <person name="Dephoure N."/>
            <person name="O'Shea E.K."/>
            <person name="Weissman J.S."/>
        </authorList>
    </citation>
    <scope>LEVEL OF PROTEIN EXPRESSION [LARGE SCALE ANALYSIS]</scope>
</reference>
<reference key="8">
    <citation type="journal article" date="2003" name="Nat. Biotechnol.">
        <title>A proteomics approach to understanding protein ubiquitination.</title>
        <authorList>
            <person name="Peng J."/>
            <person name="Schwartz D."/>
            <person name="Elias J.E."/>
            <person name="Thoreen C.C."/>
            <person name="Cheng D."/>
            <person name="Marsischky G."/>
            <person name="Roelofs J."/>
            <person name="Finley D."/>
            <person name="Gygi S.P."/>
        </authorList>
    </citation>
    <scope>UBIQUITINATION [LARGE SCALE ANALYSIS] AT LYS-324</scope>
    <scope>IDENTIFICATION BY MASS SPECTROMETRY</scope>
    <source>
        <strain>SUB592</strain>
    </source>
</reference>
<reference key="9">
    <citation type="journal article" date="2003" name="Proc. Natl. Acad. Sci. U.S.A.">
        <title>A subset of membrane-associated proteins is ubiquitinated in response to mutations in the endoplasmic reticulum degradation machinery.</title>
        <authorList>
            <person name="Hitchcock A.L."/>
            <person name="Auld K."/>
            <person name="Gygi S.P."/>
            <person name="Silver P.A."/>
        </authorList>
    </citation>
    <scope>UBIQUITINATION [LARGE SCALE ANALYSIS] AT LYS-324</scope>
    <scope>IDENTIFICATION BY MASS SPECTROMETRY</scope>
</reference>
<reference key="10">
    <citation type="journal article" date="2005" name="Mol. Cell. Proteomics">
        <title>Quantitative phosphoproteomics applied to the yeast pheromone signaling pathway.</title>
        <authorList>
            <person name="Gruhler A."/>
            <person name="Olsen J.V."/>
            <person name="Mohammed S."/>
            <person name="Mortensen P."/>
            <person name="Faergeman N.J."/>
            <person name="Mann M."/>
            <person name="Jensen O.N."/>
        </authorList>
    </citation>
    <scope>ACETYLATION [LARGE SCALE ANALYSIS] AT ALA-2</scope>
    <scope>PHOSPHORYLATION [LARGE SCALE ANALYSIS] AT SER-5</scope>
    <scope>CLEAVAGE OF INITIATOR METHIONINE [LARGE SCALE ANALYSIS]</scope>
    <scope>IDENTIFICATION BY MASS SPECTROMETRY [LARGE SCALE ANALYSIS]</scope>
    <source>
        <strain>YAL6B</strain>
    </source>
</reference>
<reference key="11">
    <citation type="journal article" date="2009" name="Science">
        <title>Global analysis of Cdk1 substrate phosphorylation sites provides insights into evolution.</title>
        <authorList>
            <person name="Holt L.J."/>
            <person name="Tuch B.B."/>
            <person name="Villen J."/>
            <person name="Johnson A.D."/>
            <person name="Gygi S.P."/>
            <person name="Morgan D.O."/>
        </authorList>
    </citation>
    <scope>IDENTIFICATION BY MASS SPECTROMETRY [LARGE SCALE ANALYSIS]</scope>
</reference>
<reference key="12">
    <citation type="journal article" date="2012" name="Proc. Natl. Acad. Sci. U.S.A.">
        <title>N-terminal acetylome analyses and functional insights of the N-terminal acetyltransferase NatB.</title>
        <authorList>
            <person name="Van Damme P."/>
            <person name="Lasa M."/>
            <person name="Polevoda B."/>
            <person name="Gazquez C."/>
            <person name="Elosegui-Artola A."/>
            <person name="Kim D.S."/>
            <person name="De Juan-Pardo E."/>
            <person name="Demeyer K."/>
            <person name="Hole K."/>
            <person name="Larrea E."/>
            <person name="Timmerman E."/>
            <person name="Prieto J."/>
            <person name="Arnesen T."/>
            <person name="Sherman F."/>
            <person name="Gevaert K."/>
            <person name="Aldabe R."/>
        </authorList>
    </citation>
    <scope>ACETYLATION [LARGE SCALE ANALYSIS] AT ALA-2</scope>
    <scope>CLEAVAGE OF INITIATOR METHIONINE [LARGE SCALE ANALYSIS]</scope>
    <scope>IDENTIFICATION BY MASS SPECTROMETRY [LARGE SCALE ANALYSIS]</scope>
</reference>
<reference key="13">
    <citation type="journal article" date="2012" name="Proteomics">
        <title>Sites of ubiquitin attachment in Saccharomyces cerevisiae.</title>
        <authorList>
            <person name="Starita L.M."/>
            <person name="Lo R.S."/>
            <person name="Eng J.K."/>
            <person name="von Haller P.D."/>
            <person name="Fields S."/>
        </authorList>
    </citation>
    <scope>UBIQUITINATION [LARGE SCALE ANALYSIS] AT LYS-283; LYS-324 AND LYS-363</scope>
    <scope>IDENTIFICATION BY MASS SPECTROMETRY [LARGE SCALE ANALYSIS]</scope>
</reference>
<protein>
    <recommendedName>
        <fullName>Glutamine synthetase</fullName>
        <shortName>GS</shortName>
        <ecNumber>6.3.1.2</ecNumber>
    </recommendedName>
    <alternativeName>
        <fullName>Glutamate--ammonia ligase</fullName>
    </alternativeName>
</protein>
<accession>P32288</accession>
<accession>D6W445</accession>
<accession>Q03959</accession>
<keyword id="KW-0002">3D-structure</keyword>
<keyword id="KW-0007">Acetylation</keyword>
<keyword id="KW-0067">ATP-binding</keyword>
<keyword id="KW-0963">Cytoplasm</keyword>
<keyword id="KW-0903">Direct protein sequencing</keyword>
<keyword id="KW-1017">Isopeptide bond</keyword>
<keyword id="KW-0436">Ligase</keyword>
<keyword id="KW-0547">Nucleotide-binding</keyword>
<keyword id="KW-0597">Phosphoprotein</keyword>
<keyword id="KW-1185">Reference proteome</keyword>
<keyword id="KW-0832">Ubl conjugation</keyword>
<dbReference type="EC" id="6.3.1.2"/>
<dbReference type="EMBL" id="M65157">
    <property type="protein sequence ID" value="AAA34644.1"/>
    <property type="status" value="ALT_SEQ"/>
    <property type="molecule type" value="Genomic_DNA"/>
</dbReference>
<dbReference type="EMBL" id="Z68111">
    <property type="protein sequence ID" value="CAA92141.1"/>
    <property type="molecule type" value="Genomic_DNA"/>
</dbReference>
<dbReference type="EMBL" id="Z71255">
    <property type="protein sequence ID" value="CAA94985.1"/>
    <property type="molecule type" value="Genomic_DNA"/>
</dbReference>
<dbReference type="EMBL" id="Z49274">
    <property type="protein sequence ID" value="CAA89289.1"/>
    <property type="molecule type" value="Genomic_DNA"/>
</dbReference>
<dbReference type="EMBL" id="BK006949">
    <property type="protein sequence ID" value="DAA11461.2"/>
    <property type="molecule type" value="Genomic_DNA"/>
</dbReference>
<dbReference type="PIR" id="S61058">
    <property type="entry name" value="S61058"/>
</dbReference>
<dbReference type="RefSeq" id="NP_015360.2">
    <property type="nucleotide sequence ID" value="NM_001184132.2"/>
</dbReference>
<dbReference type="PDB" id="3FKY">
    <property type="method" value="X-ray"/>
    <property type="resolution" value="2.95 A"/>
    <property type="chains" value="A/B/C/D/E/F/G/H/I/J/K/L/M/N/O/P/Q/R/S/T=1-370"/>
</dbReference>
<dbReference type="PDBsum" id="3FKY"/>
<dbReference type="SMR" id="P32288"/>
<dbReference type="BioGRID" id="36213">
    <property type="interactions" value="166"/>
</dbReference>
<dbReference type="DIP" id="DIP-6699N"/>
<dbReference type="FunCoup" id="P32288">
    <property type="interactions" value="1008"/>
</dbReference>
<dbReference type="IntAct" id="P32288">
    <property type="interactions" value="24"/>
</dbReference>
<dbReference type="MINT" id="P32288"/>
<dbReference type="STRING" id="4932.YPR035W"/>
<dbReference type="iPTMnet" id="P32288"/>
<dbReference type="PaxDb" id="4932-YPR035W"/>
<dbReference type="PeptideAtlas" id="P32288"/>
<dbReference type="EnsemblFungi" id="YPR035W_mRNA">
    <property type="protein sequence ID" value="YPR035W"/>
    <property type="gene ID" value="YPR035W"/>
</dbReference>
<dbReference type="GeneID" id="856147"/>
<dbReference type="KEGG" id="sce:YPR035W"/>
<dbReference type="AGR" id="SGD:S000006239"/>
<dbReference type="SGD" id="S000006239">
    <property type="gene designation" value="GLN1"/>
</dbReference>
<dbReference type="VEuPathDB" id="FungiDB:YPR035W"/>
<dbReference type="eggNOG" id="KOG0683">
    <property type="taxonomic scope" value="Eukaryota"/>
</dbReference>
<dbReference type="GeneTree" id="ENSGT00940000171472"/>
<dbReference type="HOGENOM" id="CLU_036762_1_1_1"/>
<dbReference type="InParanoid" id="P32288"/>
<dbReference type="OMA" id="DRRPNAN"/>
<dbReference type="OrthoDB" id="1936100at2759"/>
<dbReference type="BioCyc" id="MetaCyc:YPR035W-MONOMER"/>
<dbReference type="BioCyc" id="YEAST:YPR035W-MONOMER"/>
<dbReference type="Reactome" id="R-SCE-210455">
    <property type="pathway name" value="Astrocytic Glutamate-Glutamine Uptake And Metabolism"/>
</dbReference>
<dbReference type="Reactome" id="R-SCE-8964539">
    <property type="pathway name" value="Glutamate and glutamine metabolism"/>
</dbReference>
<dbReference type="BioGRID-ORCS" id="856147">
    <property type="hits" value="8 hits in 10 CRISPR screens"/>
</dbReference>
<dbReference type="CD-CODE" id="67785C55">
    <property type="entry name" value="Hypersomatic shock foci"/>
</dbReference>
<dbReference type="CD-CODE" id="E03F929F">
    <property type="entry name" value="Stress granule"/>
</dbReference>
<dbReference type="EvolutionaryTrace" id="P32288"/>
<dbReference type="PRO" id="PR:P32288"/>
<dbReference type="Proteomes" id="UP000002311">
    <property type="component" value="Chromosome XVI"/>
</dbReference>
<dbReference type="RNAct" id="P32288">
    <property type="molecule type" value="protein"/>
</dbReference>
<dbReference type="GO" id="GO:0005737">
    <property type="term" value="C:cytoplasm"/>
    <property type="evidence" value="ECO:0007005"/>
    <property type="project" value="SGD"/>
</dbReference>
<dbReference type="GO" id="GO:0034399">
    <property type="term" value="C:nuclear periphery"/>
    <property type="evidence" value="ECO:0000314"/>
    <property type="project" value="SGD"/>
</dbReference>
<dbReference type="GO" id="GO:0005634">
    <property type="term" value="C:nucleus"/>
    <property type="evidence" value="ECO:0007005"/>
    <property type="project" value="SGD"/>
</dbReference>
<dbReference type="GO" id="GO:0005524">
    <property type="term" value="F:ATP binding"/>
    <property type="evidence" value="ECO:0007669"/>
    <property type="project" value="UniProtKB-KW"/>
</dbReference>
<dbReference type="GO" id="GO:0004356">
    <property type="term" value="F:glutamine synthetase activity"/>
    <property type="evidence" value="ECO:0000314"/>
    <property type="project" value="SGD"/>
</dbReference>
<dbReference type="GO" id="GO:0006542">
    <property type="term" value="P:glutamine biosynthetic process"/>
    <property type="evidence" value="ECO:0000314"/>
    <property type="project" value="SGD"/>
</dbReference>
<dbReference type="FunFam" id="3.10.20.70:FF:000004">
    <property type="entry name" value="Glutamine synthetase"/>
    <property type="match status" value="1"/>
</dbReference>
<dbReference type="FunFam" id="3.30.590.10:FF:000004">
    <property type="entry name" value="Glutamine synthetase"/>
    <property type="match status" value="1"/>
</dbReference>
<dbReference type="Gene3D" id="3.10.20.70">
    <property type="entry name" value="Glutamine synthetase, N-terminal domain"/>
    <property type="match status" value="1"/>
</dbReference>
<dbReference type="Gene3D" id="3.30.590.10">
    <property type="entry name" value="Glutamine synthetase/guanido kinase, catalytic domain"/>
    <property type="match status" value="1"/>
</dbReference>
<dbReference type="InterPro" id="IPR008147">
    <property type="entry name" value="Gln_synt_N"/>
</dbReference>
<dbReference type="InterPro" id="IPR036651">
    <property type="entry name" value="Gln_synt_N_sf"/>
</dbReference>
<dbReference type="InterPro" id="IPR014746">
    <property type="entry name" value="Gln_synth/guanido_kin_cat_dom"/>
</dbReference>
<dbReference type="InterPro" id="IPR008146">
    <property type="entry name" value="Gln_synth_cat_dom"/>
</dbReference>
<dbReference type="InterPro" id="IPR027303">
    <property type="entry name" value="Gln_synth_gly_rich_site"/>
</dbReference>
<dbReference type="InterPro" id="IPR027302">
    <property type="entry name" value="Gln_synth_N_conserv_site"/>
</dbReference>
<dbReference type="InterPro" id="IPR050292">
    <property type="entry name" value="Glutamine_Synthetase"/>
</dbReference>
<dbReference type="PANTHER" id="PTHR20852">
    <property type="entry name" value="GLUTAMINE SYNTHETASE"/>
    <property type="match status" value="1"/>
</dbReference>
<dbReference type="PANTHER" id="PTHR20852:SF57">
    <property type="entry name" value="GLUTAMINE SYNTHETASE 2 CYTOPLASMIC"/>
    <property type="match status" value="1"/>
</dbReference>
<dbReference type="Pfam" id="PF00120">
    <property type="entry name" value="Gln-synt_C"/>
    <property type="match status" value="1"/>
</dbReference>
<dbReference type="Pfam" id="PF03951">
    <property type="entry name" value="Gln-synt_N"/>
    <property type="match status" value="1"/>
</dbReference>
<dbReference type="SMART" id="SM01230">
    <property type="entry name" value="Gln-synt_C"/>
    <property type="match status" value="1"/>
</dbReference>
<dbReference type="SUPFAM" id="SSF54368">
    <property type="entry name" value="Glutamine synthetase, N-terminal domain"/>
    <property type="match status" value="1"/>
</dbReference>
<dbReference type="SUPFAM" id="SSF55931">
    <property type="entry name" value="Glutamine synthetase/guanido kinase"/>
    <property type="match status" value="1"/>
</dbReference>
<dbReference type="PROSITE" id="PS00180">
    <property type="entry name" value="GLNA_1"/>
    <property type="match status" value="1"/>
</dbReference>
<dbReference type="PROSITE" id="PS00181">
    <property type="entry name" value="GLNA_ATP"/>
    <property type="match status" value="1"/>
</dbReference>
<dbReference type="PROSITE" id="PS51986">
    <property type="entry name" value="GS_BETA_GRASP"/>
    <property type="match status" value="1"/>
</dbReference>
<dbReference type="PROSITE" id="PS51987">
    <property type="entry name" value="GS_CATALYTIC"/>
    <property type="match status" value="1"/>
</dbReference>
<organism>
    <name type="scientific">Saccharomyces cerevisiae (strain ATCC 204508 / S288c)</name>
    <name type="common">Baker's yeast</name>
    <dbReference type="NCBI Taxonomy" id="559292"/>
    <lineage>
        <taxon>Eukaryota</taxon>
        <taxon>Fungi</taxon>
        <taxon>Dikarya</taxon>
        <taxon>Ascomycota</taxon>
        <taxon>Saccharomycotina</taxon>
        <taxon>Saccharomycetes</taxon>
        <taxon>Saccharomycetales</taxon>
        <taxon>Saccharomycetaceae</taxon>
        <taxon>Saccharomyces</taxon>
    </lineage>
</organism>
<feature type="initiator methionine" description="Removed" evidence="5 6 8 10">
    <location>
        <position position="1"/>
    </location>
</feature>
<feature type="chain" id="PRO_0000153166" description="Glutamine synthetase">
    <location>
        <begin position="2"/>
        <end position="370"/>
    </location>
</feature>
<feature type="domain" description="GS beta-grasp" evidence="1">
    <location>
        <begin position="24"/>
        <end position="103"/>
    </location>
</feature>
<feature type="domain" description="GS catalytic" evidence="2">
    <location>
        <begin position="110"/>
        <end position="370"/>
    </location>
</feature>
<feature type="modified residue" description="N-acetylalanine" evidence="6 8 10">
    <location>
        <position position="2"/>
    </location>
</feature>
<feature type="modified residue" description="Phosphoserine" evidence="8">
    <location>
        <position position="5"/>
    </location>
</feature>
<feature type="cross-link" description="Glycyl lysine isopeptide (Lys-Gly) (interchain with G-Cter in ubiquitin)" evidence="9">
    <location>
        <position position="283"/>
    </location>
</feature>
<feature type="cross-link" description="Glycyl lysine isopeptide (Lys-Gly) (interchain with G-Cter in ubiquitin)" evidence="9">
    <location>
        <position position="324"/>
    </location>
</feature>
<feature type="cross-link" description="Glycyl lysine isopeptide (Lys-Gly) (interchain with G-Cter in ubiquitin)" evidence="9">
    <location>
        <position position="363"/>
    </location>
</feature>
<feature type="sequence conflict" description="In Ref. 4; AA sequence." evidence="7" ref="4">
    <original>G</original>
    <variation>D</variation>
    <location>
        <position position="165"/>
    </location>
</feature>
<feature type="sequence conflict" description="In Ref. 4; AA sequence." evidence="7" ref="4">
    <original>M</original>
    <variation>V</variation>
    <location>
        <position position="172"/>
    </location>
</feature>
<feature type="sequence conflict" description="In Ref. 2; CAA92141/CAA94985." evidence="7" ref="2">
    <original>T</original>
    <variation>A</variation>
    <location>
        <position position="251"/>
    </location>
</feature>
<feature type="sequence conflict" description="In Ref. 2; CAA92141/CAA94985." evidence="7" ref="2">
    <original>M</original>
    <variation>T</variation>
    <location>
        <position position="264"/>
    </location>
</feature>
<feature type="strand" evidence="11">
    <location>
        <begin position="24"/>
        <end position="31"/>
    </location>
</feature>
<feature type="strand" evidence="11">
    <location>
        <begin position="33"/>
        <end position="35"/>
    </location>
</feature>
<feature type="strand" evidence="11">
    <location>
        <begin position="37"/>
        <end position="46"/>
    </location>
</feature>
<feature type="helix" evidence="11">
    <location>
        <begin position="51"/>
        <end position="53"/>
    </location>
</feature>
<feature type="strand" evidence="11">
    <location>
        <begin position="57"/>
        <end position="59"/>
    </location>
</feature>
<feature type="turn" evidence="11">
    <location>
        <begin position="61"/>
        <end position="65"/>
    </location>
</feature>
<feature type="strand" evidence="11">
    <location>
        <begin position="74"/>
        <end position="83"/>
    </location>
</feature>
<feature type="turn" evidence="11">
    <location>
        <begin position="85"/>
        <end position="87"/>
    </location>
</feature>
<feature type="strand" evidence="11">
    <location>
        <begin position="92"/>
        <end position="99"/>
    </location>
</feature>
<feature type="strand" evidence="11">
    <location>
        <begin position="103"/>
        <end position="105"/>
    </location>
</feature>
<feature type="helix" evidence="11">
    <location>
        <begin position="111"/>
        <end position="120"/>
    </location>
</feature>
<feature type="helix" evidence="11">
    <location>
        <begin position="122"/>
        <end position="124"/>
    </location>
</feature>
<feature type="strand" evidence="11">
    <location>
        <begin position="127"/>
        <end position="137"/>
    </location>
</feature>
<feature type="strand" evidence="11">
    <location>
        <begin position="141"/>
        <end position="143"/>
    </location>
</feature>
<feature type="strand" evidence="11">
    <location>
        <begin position="155"/>
        <end position="157"/>
    </location>
</feature>
<feature type="turn" evidence="11">
    <location>
        <begin position="164"/>
        <end position="166"/>
    </location>
</feature>
<feature type="helix" evidence="11">
    <location>
        <begin position="170"/>
        <end position="183"/>
    </location>
</feature>
<feature type="strand" evidence="11">
    <location>
        <begin position="187"/>
        <end position="192"/>
    </location>
</feature>
<feature type="strand" evidence="11">
    <location>
        <begin position="198"/>
        <end position="207"/>
    </location>
</feature>
<feature type="helix" evidence="11">
    <location>
        <begin position="209"/>
        <end position="227"/>
    </location>
</feature>
<feature type="turn" evidence="11">
    <location>
        <begin position="228"/>
        <end position="230"/>
    </location>
</feature>
<feature type="strand" evidence="11">
    <location>
        <begin position="232"/>
        <end position="234"/>
    </location>
</feature>
<feature type="strand" evidence="11">
    <location>
        <begin position="239"/>
        <end position="244"/>
    </location>
</feature>
<feature type="strand" evidence="11">
    <location>
        <begin position="248"/>
        <end position="254"/>
    </location>
</feature>
<feature type="helix" evidence="11">
    <location>
        <begin position="256"/>
        <end position="259"/>
    </location>
</feature>
<feature type="strand" evidence="11">
    <location>
        <begin position="260"/>
        <end position="262"/>
    </location>
</feature>
<feature type="helix" evidence="11">
    <location>
        <begin position="264"/>
        <end position="276"/>
    </location>
</feature>
<feature type="helix" evidence="11">
    <location>
        <begin position="278"/>
        <end position="283"/>
    </location>
</feature>
<feature type="helix" evidence="11">
    <location>
        <begin position="289"/>
        <end position="291"/>
    </location>
</feature>
<feature type="strand" evidence="11">
    <location>
        <begin position="307"/>
        <end position="310"/>
    </location>
</feature>
<feature type="strand" evidence="11">
    <location>
        <begin position="314"/>
        <end position="318"/>
    </location>
</feature>
<feature type="helix" evidence="11">
    <location>
        <begin position="320"/>
        <end position="325"/>
    </location>
</feature>
<feature type="strand" evidence="11">
    <location>
        <begin position="330"/>
        <end position="332"/>
    </location>
</feature>
<feature type="helix" evidence="11">
    <location>
        <begin position="341"/>
        <end position="353"/>
    </location>
</feature>
<feature type="turn" evidence="11">
    <location>
        <begin position="361"/>
        <end position="363"/>
    </location>
</feature>
<name>GLNA_YEAST</name>
<evidence type="ECO:0000255" key="1">
    <source>
        <dbReference type="PROSITE-ProRule" id="PRU01330"/>
    </source>
</evidence>
<evidence type="ECO:0000255" key="2">
    <source>
        <dbReference type="PROSITE-ProRule" id="PRU01331"/>
    </source>
</evidence>
<evidence type="ECO:0000269" key="3">
    <source>
    </source>
</evidence>
<evidence type="ECO:0000269" key="4">
    <source>
    </source>
</evidence>
<evidence type="ECO:0000269" key="5">
    <source>
    </source>
</evidence>
<evidence type="ECO:0000269" key="6">
    <source>
    </source>
</evidence>
<evidence type="ECO:0000305" key="7"/>
<evidence type="ECO:0007744" key="8">
    <source>
    </source>
</evidence>
<evidence type="ECO:0007744" key="9">
    <source>
    </source>
</evidence>
<evidence type="ECO:0007744" key="10">
    <source>
    </source>
</evidence>
<evidence type="ECO:0007829" key="11">
    <source>
        <dbReference type="PDB" id="3FKY"/>
    </source>
</evidence>
<gene>
    <name type="primary">GLN1</name>
    <name type="ordered locus">YPR035W</name>
    <name type="ORF">YP3085.01</name>
    <name type="ORF">YP9367.15</name>
</gene>
<sequence length="370" mass="41766">MAEASIEKTQILQKYLELDQRGRIIAEYVWIDGTGNLRSKGRTLKKRITSIDQLPEWNFDGSSTNQAPGHDSDIYLKPVAYYPDPFRRGDNIVVLAACYNNDGTPNKFNHRHEAAKLFAAHKDEEIWFGLEQEYTLFDMYDDVYGWPKGGYPAPQGPYYCGVGAGKVYARDMIEAHYRACLYAGLEISGINAEVMPSQWEFQVGPCTGIDMGDQLWMARYFLHRVAEEFGIKISFHPKPLKGDWNGAGCHTNVSTKEMRQPGGMKYIEQAIEKLSKRHAEHIKLYGSDNDMRLTGRHETASMTAFSSGVANRGSSIRIPRSVAKEGYGYFEDRRPASNIDPYLVTGIMCETVCGAIDNADMTKEFERESS</sequence>
<proteinExistence type="evidence at protein level"/>
<comment type="catalytic activity">
    <reaction>
        <text>L-glutamate + NH4(+) + ATP = L-glutamine + ADP + phosphate + H(+)</text>
        <dbReference type="Rhea" id="RHEA:16169"/>
        <dbReference type="ChEBI" id="CHEBI:15378"/>
        <dbReference type="ChEBI" id="CHEBI:28938"/>
        <dbReference type="ChEBI" id="CHEBI:29985"/>
        <dbReference type="ChEBI" id="CHEBI:30616"/>
        <dbReference type="ChEBI" id="CHEBI:43474"/>
        <dbReference type="ChEBI" id="CHEBI:58359"/>
        <dbReference type="ChEBI" id="CHEBI:456216"/>
        <dbReference type="EC" id="6.3.1.2"/>
    </reaction>
</comment>
<comment type="subunit">
    <text>Homooctamer.</text>
</comment>
<comment type="subcellular location">
    <subcellularLocation>
        <location evidence="3">Cytoplasm</location>
    </subcellularLocation>
</comment>
<comment type="miscellaneous">
    <text evidence="4">Present with 346000 molecules/cell in log phase SD medium.</text>
</comment>
<comment type="similarity">
    <text evidence="7">Belongs to the glutamine synthetase family.</text>
</comment>
<comment type="sequence caution" evidence="7">
    <conflict type="miscellaneous discrepancy">
        <sequence resource="EMBL-CDS" id="AAA34644"/>
    </conflict>
    <text>The submitted sequence does not correspond to the sequence published in the paper.</text>
</comment>